<gene>
    <name evidence="1" type="primary">psaB</name>
    <name type="ordered locus">Synpcc7942_2048</name>
</gene>
<accession>Q31LJ1</accession>
<protein>
    <recommendedName>
        <fullName evidence="1">Photosystem I P700 chlorophyll a apoprotein A2</fullName>
        <ecNumber evidence="1">1.97.1.12</ecNumber>
    </recommendedName>
    <alternativeName>
        <fullName evidence="1">PsaB</fullName>
    </alternativeName>
</protein>
<comment type="function">
    <text evidence="1">PsaA and PsaB bind P700, the primary electron donor of photosystem I (PSI), as well as the electron acceptors A0, A1 and FX. PSI is a plastocyanin/cytochrome c6-ferredoxin oxidoreductase, converting photonic excitation into a charge separation, which transfers an electron from the donor P700 chlorophyll pair to the spectroscopically characterized acceptors A0, A1, FX, FA and FB in turn. Oxidized P700 is reduced on the lumenal side of the thylakoid membrane by plastocyanin or cytochrome c6.</text>
</comment>
<comment type="catalytic activity">
    <reaction evidence="1">
        <text>reduced [plastocyanin] + hnu + oxidized [2Fe-2S]-[ferredoxin] = oxidized [plastocyanin] + reduced [2Fe-2S]-[ferredoxin]</text>
        <dbReference type="Rhea" id="RHEA:30407"/>
        <dbReference type="Rhea" id="RHEA-COMP:10000"/>
        <dbReference type="Rhea" id="RHEA-COMP:10001"/>
        <dbReference type="Rhea" id="RHEA-COMP:10039"/>
        <dbReference type="Rhea" id="RHEA-COMP:10040"/>
        <dbReference type="ChEBI" id="CHEBI:29036"/>
        <dbReference type="ChEBI" id="CHEBI:30212"/>
        <dbReference type="ChEBI" id="CHEBI:33737"/>
        <dbReference type="ChEBI" id="CHEBI:33738"/>
        <dbReference type="ChEBI" id="CHEBI:49552"/>
        <dbReference type="EC" id="1.97.1.12"/>
    </reaction>
</comment>
<comment type="cofactor">
    <text evidence="1">PSI electron transfer chain: 5 chlorophyll a, 1 chlorophyll a', 2 phylloquinones and 3 4Fe-4S clusters. PSI core antenna: 90 chlorophyll a, 22 carotenoids, 3 phospholipids and 1 galactolipid. P700 is a chlorophyll a/chlorophyll a' dimer, A0 is one or more chlorophyll a, A1 is one or both phylloquinones and FX is a shared 4Fe-4S iron-sulfur center.</text>
</comment>
<comment type="subunit">
    <text evidence="1">The PsaA/B heterodimer binds the P700 chlorophyll special pair and subsequent electron acceptors. PSI consists of a core antenna complex that captures photons, and an electron transfer chain that converts photonic excitation into a charge separation. The cyanobacterial PSI reaction center is composed of one copy each of PsaA,B,C,D,E,F,I,J,K,L,M and X, and forms trimeric complexes.</text>
</comment>
<comment type="subcellular location">
    <subcellularLocation>
        <location evidence="1">Cellular thylakoid membrane</location>
        <topology evidence="1">Multi-pass membrane protein</topology>
    </subcellularLocation>
</comment>
<comment type="similarity">
    <text evidence="1">Belongs to the PsaA/PsaB family.</text>
</comment>
<proteinExistence type="evidence at protein level"/>
<name>PSAB_SYNE7</name>
<dbReference type="EC" id="1.97.1.12" evidence="1"/>
<dbReference type="EMBL" id="CP000100">
    <property type="protein sequence ID" value="ABB58078.1"/>
    <property type="molecule type" value="Genomic_DNA"/>
</dbReference>
<dbReference type="RefSeq" id="WP_011244355.1">
    <property type="nucleotide sequence ID" value="NZ_JACJTX010000001.1"/>
</dbReference>
<dbReference type="PDB" id="6KIF">
    <property type="method" value="EM"/>
    <property type="resolution" value="3.30 A"/>
    <property type="chains" value="B/H/f=1-734"/>
</dbReference>
<dbReference type="PDB" id="6KIG">
    <property type="method" value="EM"/>
    <property type="resolution" value="2.90 A"/>
    <property type="chains" value="B/H/f=1-734"/>
</dbReference>
<dbReference type="PDBsum" id="6KIF"/>
<dbReference type="PDBsum" id="6KIG"/>
<dbReference type="EMDB" id="EMD-9994"/>
<dbReference type="EMDB" id="EMD-9995"/>
<dbReference type="SMR" id="Q31LJ1"/>
<dbReference type="STRING" id="1140.Synpcc7942_2048"/>
<dbReference type="PaxDb" id="1140-Synpcc7942_2048"/>
<dbReference type="GeneID" id="72430924"/>
<dbReference type="KEGG" id="syf:Synpcc7942_2048"/>
<dbReference type="eggNOG" id="COG2885">
    <property type="taxonomic scope" value="Bacteria"/>
</dbReference>
<dbReference type="HOGENOM" id="CLU_016126_1_0_3"/>
<dbReference type="OrthoDB" id="499313at2"/>
<dbReference type="BioCyc" id="MetaCyc:SYNPCC7942_2048-MONOMER"/>
<dbReference type="BioCyc" id="SYNEL:SYNPCC7942_2048-MONOMER"/>
<dbReference type="Proteomes" id="UP000889800">
    <property type="component" value="Chromosome"/>
</dbReference>
<dbReference type="GO" id="GO:0009522">
    <property type="term" value="C:photosystem I"/>
    <property type="evidence" value="ECO:0007669"/>
    <property type="project" value="UniProtKB-KW"/>
</dbReference>
<dbReference type="GO" id="GO:0031676">
    <property type="term" value="C:plasma membrane-derived thylakoid membrane"/>
    <property type="evidence" value="ECO:0007669"/>
    <property type="project" value="UniProtKB-SubCell"/>
</dbReference>
<dbReference type="GO" id="GO:0051539">
    <property type="term" value="F:4 iron, 4 sulfur cluster binding"/>
    <property type="evidence" value="ECO:0007669"/>
    <property type="project" value="UniProtKB-KW"/>
</dbReference>
<dbReference type="GO" id="GO:0016168">
    <property type="term" value="F:chlorophyll binding"/>
    <property type="evidence" value="ECO:0007669"/>
    <property type="project" value="UniProtKB-KW"/>
</dbReference>
<dbReference type="GO" id="GO:0009055">
    <property type="term" value="F:electron transfer activity"/>
    <property type="evidence" value="ECO:0007669"/>
    <property type="project" value="UniProtKB-UniRule"/>
</dbReference>
<dbReference type="GO" id="GO:0000287">
    <property type="term" value="F:magnesium ion binding"/>
    <property type="evidence" value="ECO:0007669"/>
    <property type="project" value="UniProtKB-UniRule"/>
</dbReference>
<dbReference type="GO" id="GO:0016491">
    <property type="term" value="F:oxidoreductase activity"/>
    <property type="evidence" value="ECO:0007669"/>
    <property type="project" value="UniProtKB-KW"/>
</dbReference>
<dbReference type="GO" id="GO:0015979">
    <property type="term" value="P:photosynthesis"/>
    <property type="evidence" value="ECO:0007669"/>
    <property type="project" value="UniProtKB-UniRule"/>
</dbReference>
<dbReference type="FunFam" id="1.20.1130.10:FF:000001">
    <property type="entry name" value="Photosystem I P700 chlorophyll a apoprotein A2"/>
    <property type="match status" value="1"/>
</dbReference>
<dbReference type="Gene3D" id="1.20.1130.10">
    <property type="entry name" value="Photosystem I PsaA/PsaB"/>
    <property type="match status" value="1"/>
</dbReference>
<dbReference type="HAMAP" id="MF_00482">
    <property type="entry name" value="PSI_PsaB"/>
    <property type="match status" value="1"/>
</dbReference>
<dbReference type="InterPro" id="IPR001280">
    <property type="entry name" value="PSI_PsaA/B"/>
</dbReference>
<dbReference type="InterPro" id="IPR020586">
    <property type="entry name" value="PSI_PsaA/B_CS"/>
</dbReference>
<dbReference type="InterPro" id="IPR036408">
    <property type="entry name" value="PSI_PsaA/B_sf"/>
</dbReference>
<dbReference type="InterPro" id="IPR006244">
    <property type="entry name" value="PSI_PsaB"/>
</dbReference>
<dbReference type="NCBIfam" id="TIGR01336">
    <property type="entry name" value="psaB"/>
    <property type="match status" value="1"/>
</dbReference>
<dbReference type="PANTHER" id="PTHR30128">
    <property type="entry name" value="OUTER MEMBRANE PROTEIN, OMPA-RELATED"/>
    <property type="match status" value="1"/>
</dbReference>
<dbReference type="PANTHER" id="PTHR30128:SF19">
    <property type="entry name" value="PHOTOSYSTEM I P700 CHLOROPHYLL A APOPROTEIN A1-RELATED"/>
    <property type="match status" value="1"/>
</dbReference>
<dbReference type="Pfam" id="PF00223">
    <property type="entry name" value="PsaA_PsaB"/>
    <property type="match status" value="1"/>
</dbReference>
<dbReference type="PIRSF" id="PIRSF002905">
    <property type="entry name" value="PSI_A"/>
    <property type="match status" value="1"/>
</dbReference>
<dbReference type="PRINTS" id="PR00257">
    <property type="entry name" value="PHOTSYSPSAAB"/>
</dbReference>
<dbReference type="SUPFAM" id="SSF81558">
    <property type="entry name" value="Photosystem I subunits PsaA/PsaB"/>
    <property type="match status" value="1"/>
</dbReference>
<dbReference type="PROSITE" id="PS00419">
    <property type="entry name" value="PHOTOSYSTEM_I_PSAAB"/>
    <property type="match status" value="1"/>
</dbReference>
<organism>
    <name type="scientific">Synechococcus elongatus (strain ATCC 33912 / PCC 7942 / FACHB-805)</name>
    <name type="common">Anacystis nidulans R2</name>
    <dbReference type="NCBI Taxonomy" id="1140"/>
    <lineage>
        <taxon>Bacteria</taxon>
        <taxon>Bacillati</taxon>
        <taxon>Cyanobacteriota</taxon>
        <taxon>Cyanophyceae</taxon>
        <taxon>Synechococcales</taxon>
        <taxon>Synechococcaceae</taxon>
        <taxon>Synechococcus</taxon>
    </lineage>
</organism>
<evidence type="ECO:0000255" key="1">
    <source>
        <dbReference type="HAMAP-Rule" id="MF_00482"/>
    </source>
</evidence>
<keyword id="KW-0002">3D-structure</keyword>
<keyword id="KW-0004">4Fe-4S</keyword>
<keyword id="KW-0148">Chlorophyll</keyword>
<keyword id="KW-0157">Chromophore</keyword>
<keyword id="KW-0249">Electron transport</keyword>
<keyword id="KW-0408">Iron</keyword>
<keyword id="KW-0411">Iron-sulfur</keyword>
<keyword id="KW-0460">Magnesium</keyword>
<keyword id="KW-0472">Membrane</keyword>
<keyword id="KW-0479">Metal-binding</keyword>
<keyword id="KW-0560">Oxidoreductase</keyword>
<keyword id="KW-0602">Photosynthesis</keyword>
<keyword id="KW-0603">Photosystem I</keyword>
<keyword id="KW-1185">Reference proteome</keyword>
<keyword id="KW-0793">Thylakoid</keyword>
<keyword id="KW-0812">Transmembrane</keyword>
<keyword id="KW-1133">Transmembrane helix</keyword>
<keyword id="KW-0813">Transport</keyword>
<sequence>MATKFPKFSQDLAQDPTTRRIWYGIATAHDFESHDGMTEENLYQKIFASHFGHLAIIFLWVSGNLFHVAWQGNFEQWSQDPLHVRPIAHAIWDPHFGQGAIDAFTQAGASSPVNVAYSGVYHWWYTIGMRTNGDLYQGSIFLLILSALFLFAGWLHLQPKFRPSLSWFKNAESRLNHHLAGLFGFSSLAWTGHLVHVAIPEARGQHVGWDNFLSTLPHPAGLAPFFTGNWSVYAENPDTASHAFGTAEGAGTAILTFLGGFHPQTEALWLTDIAHHHLAIAVIFIIAGHMYRTNFGIGHSIKEILEAHKPPAGGLGAGHKGLYETLNNSLHFQLALALASLGVVTSLVAQHMYSMPPYAFIAKDYTTMAALYTHHQYIATFIMCGAFAHGAIFLIRDYDPEANKNNVLARVLEHKEAIISHLSWVSLFLGFHTLGLYVHNDVVVAFGTPEKQILIEPVFAQFVQAASGKALYGFNVLLANADSAATAASLGTYLPNWLDAINSGKTALFLPIGPGDFLVHHAIALGLHTTTLILVKGALDARGSKLMPDKKDFGYSFPCDGPGRGGTCDISAWDAFYLAVFWALNTVGWVTFYWHWKNLTVWQGNVAQFNESSTYLMGWLRDYLWLNSSQLINGYNPFGTNNLSVWSWMFLFGHLIWATGFMFLISWRGYWQELIETIVWAHQRTPLANIVGWKDKPVALSIVQARVVGLAHFTVGYFLTYAAFLIASTAGKFG</sequence>
<feature type="chain" id="PRO_0000300028" description="Photosystem I P700 chlorophyll a apoprotein A2">
    <location>
        <begin position="1"/>
        <end position="734"/>
    </location>
</feature>
<feature type="transmembrane region" description="Helical; Name=I" evidence="1">
    <location>
        <begin position="46"/>
        <end position="69"/>
    </location>
</feature>
<feature type="transmembrane region" description="Helical; Name=II" evidence="1">
    <location>
        <begin position="135"/>
        <end position="158"/>
    </location>
</feature>
<feature type="transmembrane region" description="Helical; Name=III" evidence="1">
    <location>
        <begin position="175"/>
        <end position="199"/>
    </location>
</feature>
<feature type="transmembrane region" description="Helical; Name=IV" evidence="1">
    <location>
        <begin position="273"/>
        <end position="291"/>
    </location>
</feature>
<feature type="transmembrane region" description="Helical; Name=V" evidence="1">
    <location>
        <begin position="330"/>
        <end position="353"/>
    </location>
</feature>
<feature type="transmembrane region" description="Helical; Name=VI" evidence="1">
    <location>
        <begin position="369"/>
        <end position="395"/>
    </location>
</feature>
<feature type="transmembrane region" description="Helical; Name=VII" evidence="1">
    <location>
        <begin position="417"/>
        <end position="439"/>
    </location>
</feature>
<feature type="transmembrane region" description="Helical; Name=VIII" evidence="1">
    <location>
        <begin position="517"/>
        <end position="535"/>
    </location>
</feature>
<feature type="transmembrane region" description="Helical; Name=IX" evidence="1">
    <location>
        <begin position="575"/>
        <end position="596"/>
    </location>
</feature>
<feature type="transmembrane region" description="Helical; Name=X" evidence="1">
    <location>
        <begin position="643"/>
        <end position="665"/>
    </location>
</feature>
<feature type="transmembrane region" description="Helical; Name=XI" evidence="1">
    <location>
        <begin position="707"/>
        <end position="727"/>
    </location>
</feature>
<feature type="binding site" evidence="1">
    <location>
        <position position="559"/>
    </location>
    <ligand>
        <name>[4Fe-4S] cluster</name>
        <dbReference type="ChEBI" id="CHEBI:49883"/>
        <note>ligand shared between dimeric partners</note>
    </ligand>
</feature>
<feature type="binding site" evidence="1">
    <location>
        <position position="568"/>
    </location>
    <ligand>
        <name>[4Fe-4S] cluster</name>
        <dbReference type="ChEBI" id="CHEBI:49883"/>
        <note>ligand shared between dimeric partners</note>
    </ligand>
</feature>
<feature type="binding site" description="axial binding residue" evidence="1">
    <location>
        <position position="654"/>
    </location>
    <ligand>
        <name>chlorophyll a</name>
        <dbReference type="ChEBI" id="CHEBI:58416"/>
        <label>B1</label>
    </ligand>
    <ligandPart>
        <name>Mg</name>
        <dbReference type="ChEBI" id="CHEBI:25107"/>
    </ligandPart>
</feature>
<feature type="binding site" description="axial binding residue" evidence="1">
    <location>
        <position position="662"/>
    </location>
    <ligand>
        <name>chlorophyll a</name>
        <dbReference type="ChEBI" id="CHEBI:58416"/>
        <label>B3</label>
    </ligand>
    <ligandPart>
        <name>Mg</name>
        <dbReference type="ChEBI" id="CHEBI:25107"/>
    </ligandPart>
</feature>
<feature type="binding site" evidence="1">
    <location>
        <position position="670"/>
    </location>
    <ligand>
        <name>chlorophyll a</name>
        <dbReference type="ChEBI" id="CHEBI:58416"/>
        <label>B3</label>
    </ligand>
</feature>
<feature type="binding site" evidence="1">
    <location>
        <position position="671"/>
    </location>
    <ligand>
        <name>phylloquinone</name>
        <dbReference type="ChEBI" id="CHEBI:18067"/>
        <label>B</label>
    </ligand>
</feature>
<reference key="1">
    <citation type="submission" date="2005-08" db="EMBL/GenBank/DDBJ databases">
        <title>Complete sequence of chromosome 1 of Synechococcus elongatus PCC 7942.</title>
        <authorList>
            <consortium name="US DOE Joint Genome Institute"/>
            <person name="Copeland A."/>
            <person name="Lucas S."/>
            <person name="Lapidus A."/>
            <person name="Barry K."/>
            <person name="Detter J.C."/>
            <person name="Glavina T."/>
            <person name="Hammon N."/>
            <person name="Israni S."/>
            <person name="Pitluck S."/>
            <person name="Schmutz J."/>
            <person name="Larimer F."/>
            <person name="Land M."/>
            <person name="Kyrpides N."/>
            <person name="Lykidis A."/>
            <person name="Golden S."/>
            <person name="Richardson P."/>
        </authorList>
    </citation>
    <scope>NUCLEOTIDE SEQUENCE [LARGE SCALE GENOMIC DNA]</scope>
    <source>
        <strain>ATCC 33912 / PCC 7942 / FACHB-805</strain>
    </source>
</reference>